<protein>
    <recommendedName>
        <fullName evidence="1">Small ribosomal subunit protein uS9</fullName>
    </recommendedName>
    <alternativeName>
        <fullName evidence="3">30S ribosomal protein S9</fullName>
    </alternativeName>
</protein>
<dbReference type="EMBL" id="CP000255">
    <property type="protein sequence ID" value="ABD22220.1"/>
    <property type="molecule type" value="Genomic_DNA"/>
</dbReference>
<dbReference type="SMR" id="Q2FES2"/>
<dbReference type="KEGG" id="saa:SAUSA300_2171"/>
<dbReference type="HOGENOM" id="CLU_046483_2_1_9"/>
<dbReference type="OMA" id="KFQFSKR"/>
<dbReference type="Proteomes" id="UP000001939">
    <property type="component" value="Chromosome"/>
</dbReference>
<dbReference type="GO" id="GO:0022627">
    <property type="term" value="C:cytosolic small ribosomal subunit"/>
    <property type="evidence" value="ECO:0007669"/>
    <property type="project" value="TreeGrafter"/>
</dbReference>
<dbReference type="GO" id="GO:0003723">
    <property type="term" value="F:RNA binding"/>
    <property type="evidence" value="ECO:0007669"/>
    <property type="project" value="TreeGrafter"/>
</dbReference>
<dbReference type="GO" id="GO:0003735">
    <property type="term" value="F:structural constituent of ribosome"/>
    <property type="evidence" value="ECO:0007669"/>
    <property type="project" value="InterPro"/>
</dbReference>
<dbReference type="GO" id="GO:0006412">
    <property type="term" value="P:translation"/>
    <property type="evidence" value="ECO:0007669"/>
    <property type="project" value="UniProtKB-UniRule"/>
</dbReference>
<dbReference type="FunFam" id="3.30.230.10:FF:000001">
    <property type="entry name" value="30S ribosomal protein S9"/>
    <property type="match status" value="1"/>
</dbReference>
<dbReference type="Gene3D" id="3.30.230.10">
    <property type="match status" value="1"/>
</dbReference>
<dbReference type="HAMAP" id="MF_00532_B">
    <property type="entry name" value="Ribosomal_uS9_B"/>
    <property type="match status" value="1"/>
</dbReference>
<dbReference type="InterPro" id="IPR020568">
    <property type="entry name" value="Ribosomal_Su5_D2-typ_SF"/>
</dbReference>
<dbReference type="InterPro" id="IPR000754">
    <property type="entry name" value="Ribosomal_uS9"/>
</dbReference>
<dbReference type="InterPro" id="IPR023035">
    <property type="entry name" value="Ribosomal_uS9_bac/plastid"/>
</dbReference>
<dbReference type="InterPro" id="IPR020574">
    <property type="entry name" value="Ribosomal_uS9_CS"/>
</dbReference>
<dbReference type="InterPro" id="IPR014721">
    <property type="entry name" value="Ribsml_uS5_D2-typ_fold_subgr"/>
</dbReference>
<dbReference type="NCBIfam" id="NF001099">
    <property type="entry name" value="PRK00132.1"/>
    <property type="match status" value="1"/>
</dbReference>
<dbReference type="PANTHER" id="PTHR21569">
    <property type="entry name" value="RIBOSOMAL PROTEIN S9"/>
    <property type="match status" value="1"/>
</dbReference>
<dbReference type="PANTHER" id="PTHR21569:SF1">
    <property type="entry name" value="SMALL RIBOSOMAL SUBUNIT PROTEIN US9M"/>
    <property type="match status" value="1"/>
</dbReference>
<dbReference type="Pfam" id="PF00380">
    <property type="entry name" value="Ribosomal_S9"/>
    <property type="match status" value="1"/>
</dbReference>
<dbReference type="SUPFAM" id="SSF54211">
    <property type="entry name" value="Ribosomal protein S5 domain 2-like"/>
    <property type="match status" value="1"/>
</dbReference>
<dbReference type="PROSITE" id="PS00360">
    <property type="entry name" value="RIBOSOMAL_S9"/>
    <property type="match status" value="1"/>
</dbReference>
<proteinExistence type="inferred from homology"/>
<name>RS9_STAA3</name>
<sequence length="132" mass="14830">MTLAQVEYRGTGRRKNSVARVRLVPGEGNITVNNRDVREYLPFESLILDLNQPFDVTETKGNYDVLVNVHGGGFTGQAQAIRHGIARALLEADPEYRGSLKRAGLLTRDPRMKERKKPGLKAARRSPQFSKR</sequence>
<evidence type="ECO:0000255" key="1">
    <source>
        <dbReference type="HAMAP-Rule" id="MF_00532"/>
    </source>
</evidence>
<evidence type="ECO:0000256" key="2">
    <source>
        <dbReference type="SAM" id="MobiDB-lite"/>
    </source>
</evidence>
<evidence type="ECO:0000305" key="3"/>
<comment type="similarity">
    <text evidence="1">Belongs to the universal ribosomal protein uS9 family.</text>
</comment>
<keyword id="KW-0687">Ribonucleoprotein</keyword>
<keyword id="KW-0689">Ribosomal protein</keyword>
<accession>Q2FES2</accession>
<reference key="1">
    <citation type="journal article" date="2006" name="Lancet">
        <title>Complete genome sequence of USA300, an epidemic clone of community-acquired meticillin-resistant Staphylococcus aureus.</title>
        <authorList>
            <person name="Diep B.A."/>
            <person name="Gill S.R."/>
            <person name="Chang R.F."/>
            <person name="Phan T.H."/>
            <person name="Chen J.H."/>
            <person name="Davidson M.G."/>
            <person name="Lin F."/>
            <person name="Lin J."/>
            <person name="Carleton H.A."/>
            <person name="Mongodin E.F."/>
            <person name="Sensabaugh G.F."/>
            <person name="Perdreau-Remington F."/>
        </authorList>
    </citation>
    <scope>NUCLEOTIDE SEQUENCE [LARGE SCALE GENOMIC DNA]</scope>
    <source>
        <strain>USA300</strain>
    </source>
</reference>
<organism>
    <name type="scientific">Staphylococcus aureus (strain USA300)</name>
    <dbReference type="NCBI Taxonomy" id="367830"/>
    <lineage>
        <taxon>Bacteria</taxon>
        <taxon>Bacillati</taxon>
        <taxon>Bacillota</taxon>
        <taxon>Bacilli</taxon>
        <taxon>Bacillales</taxon>
        <taxon>Staphylococcaceae</taxon>
        <taxon>Staphylococcus</taxon>
    </lineage>
</organism>
<gene>
    <name evidence="1" type="primary">rpsI</name>
    <name type="ordered locus">SAUSA300_2171</name>
</gene>
<feature type="chain" id="PRO_1000051335" description="Small ribosomal subunit protein uS9">
    <location>
        <begin position="1"/>
        <end position="132"/>
    </location>
</feature>
<feature type="region of interest" description="Disordered" evidence="2">
    <location>
        <begin position="101"/>
        <end position="132"/>
    </location>
</feature>
<feature type="compositionally biased region" description="Basic residues" evidence="2">
    <location>
        <begin position="113"/>
        <end position="132"/>
    </location>
</feature>